<comment type="function">
    <text evidence="8">Probable olfactory receptor.</text>
</comment>
<comment type="subcellular location">
    <subcellularLocation>
        <location evidence="7">Cell membrane</location>
        <topology evidence="1">Multi-pass membrane protein</topology>
    </subcellularLocation>
</comment>
<comment type="tissue specificity">
    <text evidence="5 6">Highly expressed in the olfactory rosette (PubMed:17717047). Specifically localizes to crypt neurons in the olfactory neuroepithelium (PubMed:22038944). Colocalizes with the inhibitory G-protein gnaia in crypt neurons (PubMed:22038944). Not detected in other tissues tested (PubMed:17717047).</text>
</comment>
<comment type="similarity">
    <text evidence="3">Belongs to the G-protein coupled receptor 1 family.</text>
</comment>
<organism evidence="10">
    <name type="scientific">Danio rerio</name>
    <name type="common">Zebrafish</name>
    <name type="synonym">Brachydanio rerio</name>
    <dbReference type="NCBI Taxonomy" id="7955"/>
    <lineage>
        <taxon>Eukaryota</taxon>
        <taxon>Metazoa</taxon>
        <taxon>Chordata</taxon>
        <taxon>Craniata</taxon>
        <taxon>Vertebrata</taxon>
        <taxon>Euteleostomi</taxon>
        <taxon>Actinopterygii</taxon>
        <taxon>Neopterygii</taxon>
        <taxon>Teleostei</taxon>
        <taxon>Ostariophysi</taxon>
        <taxon>Cypriniformes</taxon>
        <taxon>Danionidae</taxon>
        <taxon>Danioninae</taxon>
        <taxon>Danio</taxon>
    </lineage>
</organism>
<feature type="chain" id="PRO_0000444570" description="Olfactory receptor class A-like protein 4">
    <location>
        <begin position="1"/>
        <end position="344"/>
    </location>
</feature>
<feature type="topological domain" description="Extracellular" evidence="7">
    <location>
        <begin position="1"/>
        <end position="10"/>
    </location>
</feature>
<feature type="transmembrane region" description="Helical; Name=1" evidence="1">
    <location>
        <begin position="11"/>
        <end position="31"/>
    </location>
</feature>
<feature type="topological domain" description="Cytoplasmic" evidence="7">
    <location>
        <begin position="32"/>
        <end position="47"/>
    </location>
</feature>
<feature type="transmembrane region" description="Helical; Name=2" evidence="1">
    <location>
        <begin position="48"/>
        <end position="68"/>
    </location>
</feature>
<feature type="topological domain" description="Extracellular" evidence="7">
    <location>
        <begin position="69"/>
        <end position="84"/>
    </location>
</feature>
<feature type="transmembrane region" description="Helical; Name=3" evidence="1">
    <location>
        <begin position="85"/>
        <end position="105"/>
    </location>
</feature>
<feature type="topological domain" description="Cytoplasmic" evidence="7">
    <location>
        <begin position="106"/>
        <end position="130"/>
    </location>
</feature>
<feature type="transmembrane region" description="Helical; Name=4" evidence="1">
    <location>
        <begin position="131"/>
        <end position="151"/>
    </location>
</feature>
<feature type="topological domain" description="Extracellular" evidence="7">
    <location>
        <begin position="152"/>
        <end position="186"/>
    </location>
</feature>
<feature type="transmembrane region" description="Helical; Name=5" evidence="1">
    <location>
        <begin position="187"/>
        <end position="207"/>
    </location>
</feature>
<feature type="topological domain" description="Cytoplasmic" evidence="7">
    <location>
        <begin position="208"/>
        <end position="246"/>
    </location>
</feature>
<feature type="transmembrane region" description="Helical; Name=6" evidence="1">
    <location>
        <begin position="247"/>
        <end position="267"/>
    </location>
</feature>
<feature type="topological domain" description="Extracellular" evidence="7">
    <location>
        <begin position="268"/>
        <end position="279"/>
    </location>
</feature>
<feature type="transmembrane region" description="Helical; Name=7" evidence="1">
    <location>
        <begin position="280"/>
        <end position="300"/>
    </location>
</feature>
<feature type="topological domain" description="Cytoplasmic" evidence="7">
    <location>
        <begin position="301"/>
        <end position="344"/>
    </location>
</feature>
<feature type="region of interest" description="Disordered" evidence="4">
    <location>
        <begin position="324"/>
        <end position="344"/>
    </location>
</feature>
<feature type="compositionally biased region" description="Basic and acidic residues" evidence="4">
    <location>
        <begin position="324"/>
        <end position="337"/>
    </location>
</feature>
<feature type="glycosylation site" description="N-linked (GlcNAc...) asparagine" evidence="2">
    <location>
        <position position="159"/>
    </location>
</feature>
<feature type="disulfide bond" evidence="3">
    <location>
        <begin position="83"/>
        <end position="169"/>
    </location>
</feature>
<gene>
    <name type="primary">ora4</name>
</gene>
<name>ORA4_DANRE</name>
<evidence type="ECO:0000255" key="1"/>
<evidence type="ECO:0000255" key="2">
    <source>
        <dbReference type="PROSITE-ProRule" id="PRU00498"/>
    </source>
</evidence>
<evidence type="ECO:0000255" key="3">
    <source>
        <dbReference type="PROSITE-ProRule" id="PRU00521"/>
    </source>
</evidence>
<evidence type="ECO:0000256" key="4">
    <source>
        <dbReference type="SAM" id="MobiDB-lite"/>
    </source>
</evidence>
<evidence type="ECO:0000269" key="5">
    <source>
    </source>
</evidence>
<evidence type="ECO:0000269" key="6">
    <source>
    </source>
</evidence>
<evidence type="ECO:0000305" key="7"/>
<evidence type="ECO:0000305" key="8">
    <source>
    </source>
</evidence>
<evidence type="ECO:0000312" key="9">
    <source>
        <dbReference type="EMBL" id="CAO85676.1"/>
    </source>
</evidence>
<evidence type="ECO:0000312" key="10">
    <source>
        <dbReference type="Proteomes" id="UP000000437"/>
    </source>
</evidence>
<reference evidence="10" key="1">
    <citation type="journal article" date="2013" name="Nature">
        <title>The zebrafish reference genome sequence and its relationship to the human genome.</title>
        <authorList>
            <person name="Howe K."/>
            <person name="Clark M.D."/>
            <person name="Torroja C.F."/>
            <person name="Torrance J."/>
            <person name="Berthelot C."/>
            <person name="Muffato M."/>
            <person name="Collins J.E."/>
            <person name="Humphray S."/>
            <person name="McLaren K."/>
            <person name="Matthews L."/>
            <person name="McLaren S."/>
            <person name="Sealy I."/>
            <person name="Caccamo M."/>
            <person name="Churcher C."/>
            <person name="Scott C."/>
            <person name="Barrett J.C."/>
            <person name="Koch R."/>
            <person name="Rauch G.J."/>
            <person name="White S."/>
            <person name="Chow W."/>
            <person name="Kilian B."/>
            <person name="Quintais L.T."/>
            <person name="Guerra-Assuncao J.A."/>
            <person name="Zhou Y."/>
            <person name="Gu Y."/>
            <person name="Yen J."/>
            <person name="Vogel J.H."/>
            <person name="Eyre T."/>
            <person name="Redmond S."/>
            <person name="Banerjee R."/>
            <person name="Chi J."/>
            <person name="Fu B."/>
            <person name="Langley E."/>
            <person name="Maguire S.F."/>
            <person name="Laird G.K."/>
            <person name="Lloyd D."/>
            <person name="Kenyon E."/>
            <person name="Donaldson S."/>
            <person name="Sehra H."/>
            <person name="Almeida-King J."/>
            <person name="Loveland J."/>
            <person name="Trevanion S."/>
            <person name="Jones M."/>
            <person name="Quail M."/>
            <person name="Willey D."/>
            <person name="Hunt A."/>
            <person name="Burton J."/>
            <person name="Sims S."/>
            <person name="McLay K."/>
            <person name="Plumb B."/>
            <person name="Davis J."/>
            <person name="Clee C."/>
            <person name="Oliver K."/>
            <person name="Clark R."/>
            <person name="Riddle C."/>
            <person name="Elliot D."/>
            <person name="Threadgold G."/>
            <person name="Harden G."/>
            <person name="Ware D."/>
            <person name="Begum S."/>
            <person name="Mortimore B."/>
            <person name="Kerry G."/>
            <person name="Heath P."/>
            <person name="Phillimore B."/>
            <person name="Tracey A."/>
            <person name="Corby N."/>
            <person name="Dunn M."/>
            <person name="Johnson C."/>
            <person name="Wood J."/>
            <person name="Clark S."/>
            <person name="Pelan S."/>
            <person name="Griffiths G."/>
            <person name="Smith M."/>
            <person name="Glithero R."/>
            <person name="Howden P."/>
            <person name="Barker N."/>
            <person name="Lloyd C."/>
            <person name="Stevens C."/>
            <person name="Harley J."/>
            <person name="Holt K."/>
            <person name="Panagiotidis G."/>
            <person name="Lovell J."/>
            <person name="Beasley H."/>
            <person name="Henderson C."/>
            <person name="Gordon D."/>
            <person name="Auger K."/>
            <person name="Wright D."/>
            <person name="Collins J."/>
            <person name="Raisen C."/>
            <person name="Dyer L."/>
            <person name="Leung K."/>
            <person name="Robertson L."/>
            <person name="Ambridge K."/>
            <person name="Leongamornlert D."/>
            <person name="McGuire S."/>
            <person name="Gilderthorp R."/>
            <person name="Griffiths C."/>
            <person name="Manthravadi D."/>
            <person name="Nichol S."/>
            <person name="Barker G."/>
            <person name="Whitehead S."/>
            <person name="Kay M."/>
            <person name="Brown J."/>
            <person name="Murnane C."/>
            <person name="Gray E."/>
            <person name="Humphries M."/>
            <person name="Sycamore N."/>
            <person name="Barker D."/>
            <person name="Saunders D."/>
            <person name="Wallis J."/>
            <person name="Babbage A."/>
            <person name="Hammond S."/>
            <person name="Mashreghi-Mohammadi M."/>
            <person name="Barr L."/>
            <person name="Martin S."/>
            <person name="Wray P."/>
            <person name="Ellington A."/>
            <person name="Matthews N."/>
            <person name="Ellwood M."/>
            <person name="Woodmansey R."/>
            <person name="Clark G."/>
            <person name="Cooper J."/>
            <person name="Tromans A."/>
            <person name="Grafham D."/>
            <person name="Skuce C."/>
            <person name="Pandian R."/>
            <person name="Andrews R."/>
            <person name="Harrison E."/>
            <person name="Kimberley A."/>
            <person name="Garnett J."/>
            <person name="Fosker N."/>
            <person name="Hall R."/>
            <person name="Garner P."/>
            <person name="Kelly D."/>
            <person name="Bird C."/>
            <person name="Palmer S."/>
            <person name="Gehring I."/>
            <person name="Berger A."/>
            <person name="Dooley C.M."/>
            <person name="Ersan-Urun Z."/>
            <person name="Eser C."/>
            <person name="Geiger H."/>
            <person name="Geisler M."/>
            <person name="Karotki L."/>
            <person name="Kirn A."/>
            <person name="Konantz J."/>
            <person name="Konantz M."/>
            <person name="Oberlander M."/>
            <person name="Rudolph-Geiger S."/>
            <person name="Teucke M."/>
            <person name="Lanz C."/>
            <person name="Raddatz G."/>
            <person name="Osoegawa K."/>
            <person name="Zhu B."/>
            <person name="Rapp A."/>
            <person name="Widaa S."/>
            <person name="Langford C."/>
            <person name="Yang F."/>
            <person name="Schuster S.C."/>
            <person name="Carter N.P."/>
            <person name="Harrow J."/>
            <person name="Ning Z."/>
            <person name="Herrero J."/>
            <person name="Searle S.M."/>
            <person name="Enright A."/>
            <person name="Geisler R."/>
            <person name="Plasterk R.H."/>
            <person name="Lee C."/>
            <person name="Westerfield M."/>
            <person name="de Jong P.J."/>
            <person name="Zon L.I."/>
            <person name="Postlethwait J.H."/>
            <person name="Nusslein-Volhard C."/>
            <person name="Hubbard T.J."/>
            <person name="Roest Crollius H."/>
            <person name="Rogers J."/>
            <person name="Stemple D.L."/>
        </authorList>
    </citation>
    <scope>NUCLEOTIDE SEQUENCE [LARGE SCALE GENOMIC DNA]</scope>
    <source>
        <strain>Tuebingen</strain>
    </source>
</reference>
<reference evidence="9" key="2">
    <citation type="journal article" date="2007" name="Genome Res.">
        <title>A novel olfactory receptor gene family in teleost fish.</title>
        <authorList>
            <person name="Saraiva L.R."/>
            <person name="Korsching S.I."/>
        </authorList>
    </citation>
    <scope>NUCLEOTIDE SEQUENCE [MRNA] OF 1-171</scope>
    <scope>TISSUE SPECIFICITY</scope>
    <source>
        <strain evidence="9">AB/Tu</strain>
        <tissue evidence="9">Olfactory rosette</tissue>
    </source>
</reference>
<reference evidence="7" key="3">
    <citation type="journal article" date="2012" name="Chem. Senses">
        <title>Crypt neurons express a single V1R-related ora gene.</title>
        <authorList>
            <person name="Oka Y."/>
            <person name="Saraiva L.R."/>
            <person name="Korsching S.I."/>
        </authorList>
    </citation>
    <scope>TISSUE SPECIFICITY</scope>
</reference>
<protein>
    <recommendedName>
        <fullName evidence="7">Olfactory receptor class A-like protein 4</fullName>
    </recommendedName>
</protein>
<keyword id="KW-1003">Cell membrane</keyword>
<keyword id="KW-1015">Disulfide bond</keyword>
<keyword id="KW-0297">G-protein coupled receptor</keyword>
<keyword id="KW-0325">Glycoprotein</keyword>
<keyword id="KW-0472">Membrane</keyword>
<keyword id="KW-0552">Olfaction</keyword>
<keyword id="KW-0675">Receptor</keyword>
<keyword id="KW-1185">Reference proteome</keyword>
<keyword id="KW-0716">Sensory transduction</keyword>
<keyword id="KW-0807">Transducer</keyword>
<keyword id="KW-0812">Transmembrane</keyword>
<keyword id="KW-1133">Transmembrane helix</keyword>
<proteinExistence type="evidence at transcript level"/>
<accession>A0A0R4IP11</accession>
<accession>A8E0X0</accession>
<accession>F6P1D8</accession>
<dbReference type="EMBL" id="CABZ01072989">
    <property type="status" value="NOT_ANNOTATED_CDS"/>
    <property type="molecule type" value="Genomic_DNA"/>
</dbReference>
<dbReference type="EMBL" id="CU914780">
    <property type="status" value="NOT_ANNOTATED_CDS"/>
    <property type="molecule type" value="Genomic_DNA"/>
</dbReference>
<dbReference type="EMBL" id="AM778166">
    <property type="protein sequence ID" value="CAO85676.1"/>
    <property type="molecule type" value="mRNA"/>
</dbReference>
<dbReference type="RefSeq" id="NP_001410742.1">
    <property type="nucleotide sequence ID" value="NM_001423813.1"/>
</dbReference>
<dbReference type="RefSeq" id="XP_005168339.1">
    <property type="nucleotide sequence ID" value="XM_005168282.3"/>
</dbReference>
<dbReference type="SMR" id="A0A0R4IP11"/>
<dbReference type="FunCoup" id="A0A0R4IP11">
    <property type="interactions" value="32"/>
</dbReference>
<dbReference type="STRING" id="7955.ENSDARP00000135814"/>
<dbReference type="GlyCosmos" id="A0A0R4IP11">
    <property type="glycosylation" value="1 site, No reported glycans"/>
</dbReference>
<dbReference type="PaxDb" id="7955-ENSDARP00000097647"/>
<dbReference type="Ensembl" id="ENSDART00000160884">
    <property type="protein sequence ID" value="ENSDARP00000135814"/>
    <property type="gene ID" value="ENSDARG00000078223"/>
</dbReference>
<dbReference type="GeneID" id="100004842"/>
<dbReference type="eggNOG" id="KOG4219">
    <property type="taxonomic scope" value="Eukaryota"/>
</dbReference>
<dbReference type="HOGENOM" id="CLU_1639375_0_0_1"/>
<dbReference type="InParanoid" id="A0A0R4IP11"/>
<dbReference type="OMA" id="PGWCRVF"/>
<dbReference type="OrthoDB" id="9935175at2759"/>
<dbReference type="PRO" id="PR:A0A0R4IP11"/>
<dbReference type="Proteomes" id="UP000000437">
    <property type="component" value="Chromosome 22"/>
</dbReference>
<dbReference type="Bgee" id="ENSDARG00000078223">
    <property type="expression patterns" value="Expressed in crypt olfactory receptor neuron and 1 other cell type or tissue"/>
</dbReference>
<dbReference type="GO" id="GO:0005886">
    <property type="term" value="C:plasma membrane"/>
    <property type="evidence" value="ECO:0007669"/>
    <property type="project" value="UniProtKB-SubCell"/>
</dbReference>
<dbReference type="GO" id="GO:0004930">
    <property type="term" value="F:G protein-coupled receptor activity"/>
    <property type="evidence" value="ECO:0007669"/>
    <property type="project" value="UniProtKB-KW"/>
</dbReference>
<dbReference type="GO" id="GO:0007608">
    <property type="term" value="P:sensory perception of smell"/>
    <property type="evidence" value="ECO:0007669"/>
    <property type="project" value="UniProtKB-KW"/>
</dbReference>
<dbReference type="CDD" id="cd00637">
    <property type="entry name" value="7tm_classA_rhodopsin-like"/>
    <property type="match status" value="1"/>
</dbReference>
<dbReference type="Gene3D" id="1.20.1070.10">
    <property type="entry name" value="Rhodopsin 7-helix transmembrane proteins"/>
    <property type="match status" value="1"/>
</dbReference>
<dbReference type="InterPro" id="IPR000276">
    <property type="entry name" value="GPCR_Rhodpsn"/>
</dbReference>
<dbReference type="InterPro" id="IPR017452">
    <property type="entry name" value="GPCR_Rhodpsn_7TM"/>
</dbReference>
<dbReference type="PANTHER" id="PTHR11394:SF72">
    <property type="entry name" value="OLFACTORY RECEPTOR CLASS A-LIKE PROTEIN 4"/>
    <property type="match status" value="1"/>
</dbReference>
<dbReference type="PANTHER" id="PTHR11394">
    <property type="entry name" value="TASTE RECEPTOR TYPE 2"/>
    <property type="match status" value="1"/>
</dbReference>
<dbReference type="Pfam" id="PF00001">
    <property type="entry name" value="7tm_1"/>
    <property type="match status" value="1"/>
</dbReference>
<dbReference type="PRINTS" id="PR00237">
    <property type="entry name" value="GPCRRHODOPSN"/>
</dbReference>
<dbReference type="SUPFAM" id="SSF81321">
    <property type="entry name" value="Family A G protein-coupled receptor-like"/>
    <property type="match status" value="1"/>
</dbReference>
<dbReference type="PROSITE" id="PS50262">
    <property type="entry name" value="G_PROTEIN_RECEP_F1_2"/>
    <property type="match status" value="1"/>
</dbReference>
<sequence length="344" mass="37804">MSEVLTVDAVLFGLLVFSGIIGNIMVIYVVFDCAKLCASRHLPPSDTILVHLCLANLLTSVFRTVPIFVSDLGLQVWLTAGWCRVFMLLWVWWRAVGCWVTLALSAFHCATLRRQHVSMGPLGHSRERRRVWVVLAVVWAANLLFSLPALVYTTQVRGNATVELMVISCTTRPLLGCVWEFPTFQQGYAFASSSLALNEVLPLVLMVGTNLATLQALGKHIRTVRAGGSTGAELDRHVSSERKAGHVIMALVALFVGCWVLQVAAVTYYNHNRGAHAEGLLTVAHFSASLFVGFSPLVVALGHGKLRRRISGILQSCMHRLKQTQDKPAEITEKDGRTTQSAMK</sequence>